<dbReference type="EMBL" id="AY961628">
    <property type="status" value="NOT_ANNOTATED_CDS"/>
    <property type="molecule type" value="Genomic_DNA"/>
</dbReference>
<dbReference type="BMRB" id="P0C729"/>
<dbReference type="SMR" id="P0C729"/>
<dbReference type="IntAct" id="P0C729">
    <property type="interactions" value="2"/>
</dbReference>
<dbReference type="Proteomes" id="UP000007641">
    <property type="component" value="Genome"/>
</dbReference>
<dbReference type="GO" id="GO:0033645">
    <property type="term" value="C:host cell endomembrane system"/>
    <property type="evidence" value="ECO:0007669"/>
    <property type="project" value="UniProtKB-SubCell"/>
</dbReference>
<dbReference type="GO" id="GO:0044220">
    <property type="term" value="C:host cell perinuclear region of cytoplasm"/>
    <property type="evidence" value="ECO:0007669"/>
    <property type="project" value="UniProtKB-SubCell"/>
</dbReference>
<dbReference type="GO" id="GO:0020002">
    <property type="term" value="C:host cell plasma membrane"/>
    <property type="evidence" value="ECO:0007669"/>
    <property type="project" value="UniProtKB-SubCell"/>
</dbReference>
<dbReference type="GO" id="GO:0016020">
    <property type="term" value="C:membrane"/>
    <property type="evidence" value="ECO:0007669"/>
    <property type="project" value="UniProtKB-KW"/>
</dbReference>
<dbReference type="GO" id="GO:0039648">
    <property type="term" value="P:symbiont-mediated perturbation of host ubiquitin-like protein modification"/>
    <property type="evidence" value="ECO:0007669"/>
    <property type="project" value="UniProtKB-KW"/>
</dbReference>
<dbReference type="GO" id="GO:0019042">
    <property type="term" value="P:viral latency"/>
    <property type="evidence" value="ECO:0007669"/>
    <property type="project" value="InterPro"/>
</dbReference>
<dbReference type="InterPro" id="IPR010881">
    <property type="entry name" value="Herpes_LMP2"/>
</dbReference>
<dbReference type="Pfam" id="PF07415">
    <property type="entry name" value="Herpes_LMP2"/>
    <property type="match status" value="1"/>
</dbReference>
<evidence type="ECO:0000250" key="1"/>
<evidence type="ECO:0000250" key="2">
    <source>
        <dbReference type="UniProtKB" id="P13285"/>
    </source>
</evidence>
<evidence type="ECO:0000255" key="3"/>
<evidence type="ECO:0000256" key="4">
    <source>
        <dbReference type="SAM" id="MobiDB-lite"/>
    </source>
</evidence>
<evidence type="ECO:0000305" key="5"/>
<sequence length="496" mass="52890">MGSLEMVPMGAGPPSPGGDPDGDDGGNNSQYPSASGSSGNTPTPPNDEERESNEEPPPPYEDPYWGNGDRHSDYQPLGTQDQSLYLGLQHDGNDGLPPPPYSPRDDSSQHIYEEAGRGSMNPVCLPVIVAPYLFWLAAIAASCFTASVSTVVTATGLALSLLLLAAVASSYAAAQRKLLTPVTVLTAVVFFAICLTWRIEDPPFNSLLFALLAAAGGLQGIYVLVMLVLLILAYRRRWRRLTVCGGIMFLACVLVLIVDAVLQLSPLLGAVTVVSMTLLLLAFVLWLSSPGGLGTLGAALLTLAAALALLASLILGTLNLTTMFLLMLLWTLVVLLICSSCSSCPLTKILLARLFLYALALLLLASALIAGGSILQTNFKSLSSTEFIPNLFCMLLLIVAGILFILAILTEWGSGNRTYGPVFMCLGGLLTMVAGAVWLTVMTNTLLSAWILTAGFLIFLIGFALFGVIRCCRYCCYYCLTLESEERPPTPYRNTV</sequence>
<name>LMP2_EBVG</name>
<accession>P0C729</accession>
<organismHost>
    <name type="scientific">Homo sapiens</name>
    <name type="common">Human</name>
    <dbReference type="NCBI Taxonomy" id="9606"/>
</organismHost>
<organism>
    <name type="scientific">Epstein-Barr virus (strain GD1)</name>
    <name type="common">HHV-4</name>
    <name type="synonym">Human gammaherpesvirus 4</name>
    <dbReference type="NCBI Taxonomy" id="10376"/>
    <lineage>
        <taxon>Viruses</taxon>
        <taxon>Duplodnaviria</taxon>
        <taxon>Heunggongvirae</taxon>
        <taxon>Peploviricota</taxon>
        <taxon>Herviviricetes</taxon>
        <taxon>Herpesvirales</taxon>
        <taxon>Orthoherpesviridae</taxon>
        <taxon>Gammaherpesvirinae</taxon>
        <taxon>Lymphocryptovirus</taxon>
        <taxon>Lymphocryptovirus humangamma4</taxon>
    </lineage>
</organism>
<proteinExistence type="inferred from homology"/>
<protein>
    <recommendedName>
        <fullName>Latent membrane protein 2</fullName>
    </recommendedName>
    <alternativeName>
        <fullName>Terminal protein</fullName>
    </alternativeName>
</protein>
<feature type="chain" id="PRO_0000375964" description="Latent membrane protein 2">
    <location>
        <begin position="1"/>
        <end position="496"/>
    </location>
</feature>
<feature type="topological domain" description="Cytoplasmic" evidence="3">
    <location>
        <begin position="1"/>
        <end position="123"/>
    </location>
</feature>
<feature type="transmembrane region" description="Helical" evidence="3">
    <location>
        <begin position="124"/>
        <end position="144"/>
    </location>
</feature>
<feature type="topological domain" description="Extracellular" evidence="3">
    <location>
        <begin position="145"/>
        <end position="147"/>
    </location>
</feature>
<feature type="transmembrane region" description="Helical" evidence="3">
    <location>
        <begin position="148"/>
        <end position="168"/>
    </location>
</feature>
<feature type="topological domain" description="Cytoplasmic" evidence="3">
    <location>
        <begin position="169"/>
        <end position="177"/>
    </location>
</feature>
<feature type="transmembrane region" description="Helical" evidence="3">
    <location>
        <begin position="178"/>
        <end position="197"/>
    </location>
</feature>
<feature type="topological domain" description="Extracellular" evidence="3">
    <location>
        <begin position="198"/>
        <end position="210"/>
    </location>
</feature>
<feature type="transmembrane region" description="Helical" evidence="3">
    <location>
        <begin position="211"/>
        <end position="231"/>
    </location>
</feature>
<feature type="topological domain" description="Cytoplasmic" evidence="3">
    <location>
        <begin position="232"/>
        <end position="240"/>
    </location>
</feature>
<feature type="transmembrane region" description="Helical" evidence="3">
    <location>
        <begin position="241"/>
        <end position="261"/>
    </location>
</feature>
<feature type="topological domain" description="Extracellular" evidence="3">
    <location>
        <begin position="262"/>
        <end position="266"/>
    </location>
</feature>
<feature type="transmembrane region" description="Helical" evidence="3">
    <location>
        <begin position="267"/>
        <end position="287"/>
    </location>
</feature>
<feature type="topological domain" description="Cytoplasmic" evidence="3">
    <location>
        <begin position="288"/>
        <end position="295"/>
    </location>
</feature>
<feature type="transmembrane region" description="Helical" evidence="3">
    <location>
        <begin position="296"/>
        <end position="316"/>
    </location>
</feature>
<feature type="topological domain" description="Extracellular" evidence="3">
    <location>
        <position position="317"/>
    </location>
</feature>
<feature type="transmembrane region" description="Helical" evidence="3">
    <location>
        <begin position="318"/>
        <end position="338"/>
    </location>
</feature>
<feature type="topological domain" description="Cytoplasmic" evidence="3">
    <location>
        <begin position="339"/>
        <end position="353"/>
    </location>
</feature>
<feature type="transmembrane region" description="Helical" evidence="3">
    <location>
        <begin position="354"/>
        <end position="374"/>
    </location>
</feature>
<feature type="topological domain" description="Extracellular" evidence="3">
    <location>
        <begin position="375"/>
        <end position="387"/>
    </location>
</feature>
<feature type="transmembrane region" description="Helical" evidence="3">
    <location>
        <begin position="388"/>
        <end position="408"/>
    </location>
</feature>
<feature type="topological domain" description="Cytoplasmic" evidence="3">
    <location>
        <begin position="409"/>
        <end position="421"/>
    </location>
</feature>
<feature type="transmembrane region" description="Helical" evidence="3">
    <location>
        <begin position="422"/>
        <end position="442"/>
    </location>
</feature>
<feature type="topological domain" description="Extracellular" evidence="3">
    <location>
        <begin position="443"/>
        <end position="448"/>
    </location>
</feature>
<feature type="transmembrane region" description="Helical" evidence="3">
    <location>
        <begin position="449"/>
        <end position="469"/>
    </location>
</feature>
<feature type="topological domain" description="Cytoplasmic" evidence="3">
    <location>
        <begin position="470"/>
        <end position="496"/>
    </location>
</feature>
<feature type="region of interest" description="Disordered" evidence="4">
    <location>
        <begin position="1"/>
        <end position="108"/>
    </location>
</feature>
<feature type="short sequence motif" description="PPxY motif" evidence="1">
    <location>
        <begin position="97"/>
        <end position="101"/>
    </location>
</feature>
<feature type="compositionally biased region" description="Polar residues" evidence="4">
    <location>
        <begin position="27"/>
        <end position="41"/>
    </location>
</feature>
<feature type="modified residue" description="Phosphotyrosine; by host" evidence="3">
    <location>
        <position position="112"/>
    </location>
</feature>
<feature type="splice variant" id="VSP_037377" description="In isoform LMP2B." evidence="5">
    <location>
        <begin position="1"/>
        <end position="119"/>
    </location>
</feature>
<reference key="1">
    <citation type="journal article" date="2005" name="J. Virol.">
        <title>Genomic sequence analysis of Epstein-Barr virus strain GD1 from a nasopharyngeal carcinoma patient.</title>
        <authorList>
            <person name="Zeng M.-S."/>
            <person name="Li D.-J."/>
            <person name="Liu Q.-L."/>
            <person name="Song L.-B."/>
            <person name="Li M.-Z."/>
            <person name="Zhang R.-H."/>
            <person name="Yu X.-J."/>
            <person name="Wang H.-M."/>
            <person name="Ernberg I."/>
            <person name="Zeng Y.-X."/>
        </authorList>
    </citation>
    <scope>NUCLEOTIDE SEQUENCE [LARGE SCALE GENOMIC DNA]</scope>
</reference>
<comment type="function">
    <molecule>Isoform LMP2A</molecule>
    <text evidence="1">Maintains EBV latent infection of B-lymphocyte, by preventing lytic reactivation of the virus in response to surface immunoglobulin (sIg) cross-linking. Acts like a dominant negative inhibitor of the sIg-associated protein tyrosine kinases, LYN and SYK. Also blocks translocation of the B-cell antigen receptor (BCR) into lipid rafts, preventing the subsequent signaling and accelerated internalization of the BCR upon BCR cross-linking. Serves as a molecular scaffold to recruit SYK, LYN and E3 protein-ubiquitin ligases, such as ITCH and NEDD4L, leading to ubiquitination and potential degradation of both tyrosines kinases. Possesses a constitutive signaling activity in non-transformed cells, inducing bypass of normal B lymphocyte developmental checkpoints allowing immunoglobulin-negative cells to colonize peripheral lymphoid organs (By similarity).</text>
</comment>
<comment type="function">
    <molecule>Isoform LMP2B</molecule>
    <text evidence="1">May be a negative regulator of isoform LMP2A.</text>
</comment>
<comment type="subunit">
    <molecule>Isoform LMP2A</molecule>
    <text evidence="2">The cytoplasmic N-terminal domain interacts with human SRC family protein tyrosine kinases SYK and LYN. Binds human ITCH, WWP2 and NEDD4L.</text>
</comment>
<comment type="subcellular location">
    <molecule>Isoform LMP2A</molecule>
    <subcellularLocation>
        <location>Host cell membrane</location>
        <topology>Multi-pass membrane protein</topology>
    </subcellularLocation>
    <text evidence="2">Isoform LMP2A is localized in plasma membrane lipid rafts.</text>
</comment>
<comment type="subcellular location">
    <molecule>Isoform LMP2B</molecule>
    <subcellularLocation>
        <location>Host endomembrane system</location>
        <topology>Multi-pass membrane protein</topology>
    </subcellularLocation>
    <subcellularLocation>
        <location>Host cytoplasm</location>
        <location>Host perinuclear region</location>
    </subcellularLocation>
    <text evidence="2">Isoform LMP2B localizes to perinuclear regions.</text>
</comment>
<comment type="alternative products">
    <event type="alternative splicing"/>
    <isoform>
        <id>P0C729-1</id>
        <name>LMP2A</name>
        <name>TP1</name>
        <sequence type="displayed"/>
    </isoform>
    <isoform>
        <id>P0C729-2</id>
        <name>LMP2B</name>
        <name>TP2</name>
        <sequence type="described" ref="VSP_037377"/>
    </isoform>
</comment>
<comment type="PTM">
    <molecule>Isoform LMP2A</molecule>
    <text evidence="2">Phosphorylated on cytoplasmic N-terminal tyrosine residues, possibly by human LYN.</text>
</comment>
<comment type="PTM">
    <text evidence="1">Can be ubiquitinated by human ITCH and WWP2 on the N-terminus in a lysine-independent manner.</text>
</comment>
<comment type="miscellaneous">
    <text>In healthy individuals, EBV typically establishes a persistent latent infection in which the virus can be detected in resting, nonproliferating peripheral B-lymphocytes. These latently infected cells express only 2 virally encoded genes, LMP2A and EBNA1.</text>
</comment>
<comment type="similarity">
    <text evidence="5">Belongs to the herpesviridae LMP-2 family.</text>
</comment>
<comment type="caution">
    <text evidence="5">Several frameshift have been corrected to get the correct translation.</text>
</comment>
<gene>
    <name type="primary">LMP2</name>
</gene>
<keyword id="KW-0025">Alternative splicing</keyword>
<keyword id="KW-1032">Host cell membrane</keyword>
<keyword id="KW-1035">Host cytoplasm</keyword>
<keyword id="KW-1043">Host membrane</keyword>
<keyword id="KW-0945">Host-virus interaction</keyword>
<keyword id="KW-0472">Membrane</keyword>
<keyword id="KW-1123">Modulation of host E3 ubiquitin ligases by virus</keyword>
<keyword id="KW-1130">Modulation of host ubiquitin pathway by virus</keyword>
<keyword id="KW-0597">Phosphoprotein</keyword>
<keyword id="KW-0812">Transmembrane</keyword>
<keyword id="KW-1133">Transmembrane helix</keyword>
<keyword id="KW-0832">Ubl conjugation</keyword>